<keyword id="KW-0964">Secreted</keyword>
<keyword id="KW-0843">Virulence</keyword>
<evidence type="ECO:0000250" key="1"/>
<evidence type="ECO:0000256" key="2">
    <source>
        <dbReference type="SAM" id="MobiDB-lite"/>
    </source>
</evidence>
<evidence type="ECO:0000305" key="3"/>
<proteinExistence type="inferred from homology"/>
<protein>
    <recommendedName>
        <fullName>Effector protein BipC</fullName>
    </recommendedName>
</protein>
<dbReference type="EMBL" id="CP000547">
    <property type="protein sequence ID" value="ABO02192.1"/>
    <property type="status" value="ALT_INIT"/>
    <property type="molecule type" value="Genomic_DNA"/>
</dbReference>
<dbReference type="RefSeq" id="WP_004203135.1">
    <property type="nucleotide sequence ID" value="NZ_CP007801.1"/>
</dbReference>
<dbReference type="GeneID" id="92975830"/>
<dbReference type="KEGG" id="bmaz:BM44_4991"/>
<dbReference type="KEGG" id="bmn:BMA10247_A0754"/>
<dbReference type="PATRIC" id="fig|320389.8.peg.5727"/>
<dbReference type="GO" id="GO:0005576">
    <property type="term" value="C:extracellular region"/>
    <property type="evidence" value="ECO:0007669"/>
    <property type="project" value="UniProtKB-SubCell"/>
</dbReference>
<dbReference type="InterPro" id="IPR005427">
    <property type="entry name" value="BipC/SctB"/>
</dbReference>
<dbReference type="NCBIfam" id="TIGR02101">
    <property type="entry name" value="IpaC_SipC"/>
    <property type="match status" value="1"/>
</dbReference>
<dbReference type="Pfam" id="PF09599">
    <property type="entry name" value="IpaC_SipC"/>
    <property type="match status" value="1"/>
</dbReference>
<dbReference type="PRINTS" id="PR01608">
    <property type="entry name" value="BACINVASINC"/>
</dbReference>
<accession>A3MCG9</accession>
<gene>
    <name type="primary">bipC</name>
    <name type="ordered locus">BMA10247_A0754</name>
</gene>
<organism>
    <name type="scientific">Burkholderia mallei (strain NCTC 10247)</name>
    <dbReference type="NCBI Taxonomy" id="320389"/>
    <lineage>
        <taxon>Bacteria</taxon>
        <taxon>Pseudomonadati</taxon>
        <taxon>Pseudomonadota</taxon>
        <taxon>Betaproteobacteria</taxon>
        <taxon>Burkholderiales</taxon>
        <taxon>Burkholderiaceae</taxon>
        <taxon>Burkholderia</taxon>
        <taxon>pseudomallei group</taxon>
    </lineage>
</organism>
<feature type="chain" id="PRO_0000343995" description="Effector protein BipC">
    <location>
        <begin position="1"/>
        <end position="419"/>
    </location>
</feature>
<feature type="region of interest" description="Disordered" evidence="2">
    <location>
        <begin position="62"/>
        <end position="91"/>
    </location>
</feature>
<feature type="region of interest" description="Disordered" evidence="2">
    <location>
        <begin position="338"/>
        <end position="402"/>
    </location>
</feature>
<feature type="compositionally biased region" description="Basic and acidic residues" evidence="2">
    <location>
        <begin position="71"/>
        <end position="91"/>
    </location>
</feature>
<feature type="compositionally biased region" description="Basic and acidic residues" evidence="2">
    <location>
        <begin position="380"/>
        <end position="392"/>
    </location>
</feature>
<comment type="subcellular location">
    <subcellularLocation>
        <location evidence="1">Secreted</location>
    </subcellularLocation>
    <text evidence="1">Secreted via the bsa type III secretion system.</text>
</comment>
<comment type="similarity">
    <text evidence="3">Belongs to the SctB/SipC family.</text>
</comment>
<comment type="sequence caution" evidence="3">
    <conflict type="erroneous initiation">
        <sequence resource="EMBL-CDS" id="ABO02192"/>
    </conflict>
</comment>
<name>BIPC_BURM7</name>
<reference key="1">
    <citation type="journal article" date="2010" name="Genome Biol. Evol.">
        <title>Continuing evolution of Burkholderia mallei through genome reduction and large-scale rearrangements.</title>
        <authorList>
            <person name="Losada L."/>
            <person name="Ronning C.M."/>
            <person name="DeShazer D."/>
            <person name="Woods D."/>
            <person name="Fedorova N."/>
            <person name="Kim H.S."/>
            <person name="Shabalina S.A."/>
            <person name="Pearson T.R."/>
            <person name="Brinkac L."/>
            <person name="Tan P."/>
            <person name="Nandi T."/>
            <person name="Crabtree J."/>
            <person name="Badger J."/>
            <person name="Beckstrom-Sternberg S."/>
            <person name="Saqib M."/>
            <person name="Schutzer S.E."/>
            <person name="Keim P."/>
            <person name="Nierman W.C."/>
        </authorList>
    </citation>
    <scope>NUCLEOTIDE SEQUENCE [LARGE SCALE GENOMIC DNA]</scope>
    <source>
        <strain>NCTC 10247</strain>
    </source>
</reference>
<sequence length="419" mass="44323">MSIGVQSSGINISHAELSRLVDAGKSEQGDKAVRDDGRALARADAALAAVVGERVAARRDAVAGSGAQRVELARPKPDAQTRATDRRTVSGLEREHKRLAASQTPRVTGMHDALVQRHVSLDGAKAAHGEGVKRAAGDAPRAAADAPQRFAFADDKAFDAMLALGAAMQKNVQSDLAMQGKLTMLAHDAMMSAAAQDRSIGAAQMTAAIAGGALQATTSLGGAMQQMKSLSTKSMSIEKELKPQAELKQFHAEQALELRGINKPVLSNDEVSHVKIKRDTGETVRHEIDHGGERMSDEHASVLAQEAPARQHRIDMHGMRHEENLVKAGRQQMKGDLLQSGGQIGKNQIDGASAQQQGADRAEQKEDENAQQTAMAAASTRDEAAHRSREAAQKAIDAAKSQVANDNAVAAQVAGNLRT</sequence>